<gene>
    <name evidence="1" type="primary">lspA</name>
    <name type="ordered locus">LGAS_1015</name>
</gene>
<protein>
    <recommendedName>
        <fullName evidence="1">Lipoprotein signal peptidase</fullName>
        <ecNumber evidence="1">3.4.23.36</ecNumber>
    </recommendedName>
    <alternativeName>
        <fullName evidence="1">Prolipoprotein signal peptidase</fullName>
    </alternativeName>
    <alternativeName>
        <fullName evidence="1">Signal peptidase II</fullName>
        <shortName evidence="1">SPase II</shortName>
    </alternativeName>
</protein>
<proteinExistence type="inferred from homology"/>
<comment type="function">
    <text evidence="1">This protein specifically catalyzes the removal of signal peptides from prolipoproteins.</text>
</comment>
<comment type="catalytic activity">
    <reaction evidence="1">
        <text>Release of signal peptides from bacterial membrane prolipoproteins. Hydrolyzes -Xaa-Yaa-Zaa-|-(S,diacylglyceryl)Cys-, in which Xaa is hydrophobic (preferably Leu), and Yaa (Ala or Ser) and Zaa (Gly or Ala) have small, neutral side chains.</text>
        <dbReference type="EC" id="3.4.23.36"/>
    </reaction>
</comment>
<comment type="pathway">
    <text evidence="1">Protein modification; lipoprotein biosynthesis (signal peptide cleavage).</text>
</comment>
<comment type="subcellular location">
    <subcellularLocation>
        <location evidence="1">Cell membrane</location>
        <topology evidence="1">Multi-pass membrane protein</topology>
    </subcellularLocation>
</comment>
<comment type="similarity">
    <text evidence="1">Belongs to the peptidase A8 family.</text>
</comment>
<organism>
    <name type="scientific">Lactobacillus gasseri (strain ATCC 33323 / DSM 20243 / BCRC 14619 / CIP 102991 / JCM 1131 / KCTC 3163 / NCIMB 11718 / NCTC 13722 / AM63)</name>
    <dbReference type="NCBI Taxonomy" id="324831"/>
    <lineage>
        <taxon>Bacteria</taxon>
        <taxon>Bacillati</taxon>
        <taxon>Bacillota</taxon>
        <taxon>Bacilli</taxon>
        <taxon>Lactobacillales</taxon>
        <taxon>Lactobacillaceae</taxon>
        <taxon>Lactobacillus</taxon>
    </lineage>
</organism>
<dbReference type="EC" id="3.4.23.36" evidence="1"/>
<dbReference type="EMBL" id="CP000413">
    <property type="protein sequence ID" value="ABJ60391.1"/>
    <property type="molecule type" value="Genomic_DNA"/>
</dbReference>
<dbReference type="RefSeq" id="WP_003647288.1">
    <property type="nucleotide sequence ID" value="NZ_WBMG01000008.1"/>
</dbReference>
<dbReference type="SMR" id="Q043I1"/>
<dbReference type="GeneID" id="29639324"/>
<dbReference type="KEGG" id="lga:LGAS_1015"/>
<dbReference type="HOGENOM" id="CLU_083252_3_3_9"/>
<dbReference type="BioCyc" id="LGAS324831:G1G6Y-1015-MONOMER"/>
<dbReference type="UniPathway" id="UPA00665"/>
<dbReference type="Proteomes" id="UP000000664">
    <property type="component" value="Chromosome"/>
</dbReference>
<dbReference type="GO" id="GO:0005886">
    <property type="term" value="C:plasma membrane"/>
    <property type="evidence" value="ECO:0007669"/>
    <property type="project" value="UniProtKB-SubCell"/>
</dbReference>
<dbReference type="GO" id="GO:0004190">
    <property type="term" value="F:aspartic-type endopeptidase activity"/>
    <property type="evidence" value="ECO:0007669"/>
    <property type="project" value="UniProtKB-UniRule"/>
</dbReference>
<dbReference type="GO" id="GO:0006508">
    <property type="term" value="P:proteolysis"/>
    <property type="evidence" value="ECO:0007669"/>
    <property type="project" value="UniProtKB-KW"/>
</dbReference>
<dbReference type="HAMAP" id="MF_00161">
    <property type="entry name" value="LspA"/>
    <property type="match status" value="1"/>
</dbReference>
<dbReference type="InterPro" id="IPR001872">
    <property type="entry name" value="Peptidase_A8"/>
</dbReference>
<dbReference type="NCBIfam" id="TIGR00077">
    <property type="entry name" value="lspA"/>
    <property type="match status" value="1"/>
</dbReference>
<dbReference type="PANTHER" id="PTHR33695">
    <property type="entry name" value="LIPOPROTEIN SIGNAL PEPTIDASE"/>
    <property type="match status" value="1"/>
</dbReference>
<dbReference type="PANTHER" id="PTHR33695:SF1">
    <property type="entry name" value="LIPOPROTEIN SIGNAL PEPTIDASE"/>
    <property type="match status" value="1"/>
</dbReference>
<dbReference type="Pfam" id="PF01252">
    <property type="entry name" value="Peptidase_A8"/>
    <property type="match status" value="1"/>
</dbReference>
<dbReference type="PRINTS" id="PR00781">
    <property type="entry name" value="LIPOSIGPTASE"/>
</dbReference>
<reference key="1">
    <citation type="journal article" date="2006" name="Proc. Natl. Acad. Sci. U.S.A.">
        <title>Comparative genomics of the lactic acid bacteria.</title>
        <authorList>
            <person name="Makarova K.S."/>
            <person name="Slesarev A."/>
            <person name="Wolf Y.I."/>
            <person name="Sorokin A."/>
            <person name="Mirkin B."/>
            <person name="Koonin E.V."/>
            <person name="Pavlov A."/>
            <person name="Pavlova N."/>
            <person name="Karamychev V."/>
            <person name="Polouchine N."/>
            <person name="Shakhova V."/>
            <person name="Grigoriev I."/>
            <person name="Lou Y."/>
            <person name="Rohksar D."/>
            <person name="Lucas S."/>
            <person name="Huang K."/>
            <person name="Goodstein D.M."/>
            <person name="Hawkins T."/>
            <person name="Plengvidhya V."/>
            <person name="Welker D."/>
            <person name="Hughes J."/>
            <person name="Goh Y."/>
            <person name="Benson A."/>
            <person name="Baldwin K."/>
            <person name="Lee J.-H."/>
            <person name="Diaz-Muniz I."/>
            <person name="Dosti B."/>
            <person name="Smeianov V."/>
            <person name="Wechter W."/>
            <person name="Barabote R."/>
            <person name="Lorca G."/>
            <person name="Altermann E."/>
            <person name="Barrangou R."/>
            <person name="Ganesan B."/>
            <person name="Xie Y."/>
            <person name="Rawsthorne H."/>
            <person name="Tamir D."/>
            <person name="Parker C."/>
            <person name="Breidt F."/>
            <person name="Broadbent J.R."/>
            <person name="Hutkins R."/>
            <person name="O'Sullivan D."/>
            <person name="Steele J."/>
            <person name="Unlu G."/>
            <person name="Saier M.H. Jr."/>
            <person name="Klaenhammer T."/>
            <person name="Richardson P."/>
            <person name="Kozyavkin S."/>
            <person name="Weimer B.C."/>
            <person name="Mills D.A."/>
        </authorList>
    </citation>
    <scope>NUCLEOTIDE SEQUENCE [LARGE SCALE GENOMIC DNA]</scope>
    <source>
        <strain>ATCC 33323 / DSM 20243 / BCRC 14619 / CIP 102991 / JCM 1131 / KCTC 3163 / NCIMB 11718 / NCTC 13722 / AM63</strain>
    </source>
</reference>
<evidence type="ECO:0000255" key="1">
    <source>
        <dbReference type="HAMAP-Rule" id="MF_00161"/>
    </source>
</evidence>
<accession>Q043I1</accession>
<keyword id="KW-0064">Aspartyl protease</keyword>
<keyword id="KW-1003">Cell membrane</keyword>
<keyword id="KW-0378">Hydrolase</keyword>
<keyword id="KW-0472">Membrane</keyword>
<keyword id="KW-0645">Protease</keyword>
<keyword id="KW-0812">Transmembrane</keyword>
<keyword id="KW-1133">Transmembrane helix</keyword>
<name>LSPA_LACGA</name>
<sequence>MKRAKQVLYLVISLLVVIADQGLKNYIVTNFKIGDEHTVIPGILSFTYLQNDGAAWNIFSGQMILFYLISIAAIAVVVYYLFNPKYKNWLFDTGLALVLGGIIGNFIDRLHLKYVIDMLQLDFVQFNIFNIADSAITVGIVLVFIYLIFMSEKD</sequence>
<feature type="chain" id="PRO_0000289392" description="Lipoprotein signal peptidase">
    <location>
        <begin position="1"/>
        <end position="154"/>
    </location>
</feature>
<feature type="transmembrane region" description="Helical" evidence="1">
    <location>
        <begin position="7"/>
        <end position="27"/>
    </location>
</feature>
<feature type="transmembrane region" description="Helical" evidence="1">
    <location>
        <begin position="58"/>
        <end position="78"/>
    </location>
</feature>
<feature type="transmembrane region" description="Helical" evidence="1">
    <location>
        <begin position="88"/>
        <end position="108"/>
    </location>
</feature>
<feature type="transmembrane region" description="Helical" evidence="1">
    <location>
        <begin position="128"/>
        <end position="148"/>
    </location>
</feature>
<feature type="active site" evidence="1">
    <location>
        <position position="117"/>
    </location>
</feature>
<feature type="active site" evidence="1">
    <location>
        <position position="133"/>
    </location>
</feature>